<keyword id="KW-0145">Chemotaxis</keyword>
<keyword id="KW-0963">Cytoplasm</keyword>
<keyword id="KW-0378">Hydrolase</keyword>
<keyword id="KW-0597">Phosphoprotein</keyword>
<reference key="1">
    <citation type="journal article" date="2005" name="J. Bacteriol.">
        <title>Insights into genome plasticity and pathogenicity of the plant pathogenic Bacterium Xanthomonas campestris pv. vesicatoria revealed by the complete genome sequence.</title>
        <authorList>
            <person name="Thieme F."/>
            <person name="Koebnik R."/>
            <person name="Bekel T."/>
            <person name="Berger C."/>
            <person name="Boch J."/>
            <person name="Buettner D."/>
            <person name="Caldana C."/>
            <person name="Gaigalat L."/>
            <person name="Goesmann A."/>
            <person name="Kay S."/>
            <person name="Kirchner O."/>
            <person name="Lanz C."/>
            <person name="Linke B."/>
            <person name="McHardy A.C."/>
            <person name="Meyer F."/>
            <person name="Mittenhuber G."/>
            <person name="Nies D.H."/>
            <person name="Niesbach-Kloesgen U."/>
            <person name="Patschkowski T."/>
            <person name="Rueckert C."/>
            <person name="Rupp O."/>
            <person name="Schneiker S."/>
            <person name="Schuster S.C."/>
            <person name="Vorhoelter F.J."/>
            <person name="Weber E."/>
            <person name="Puehler A."/>
            <person name="Bonas U."/>
            <person name="Bartels D."/>
            <person name="Kaiser O."/>
        </authorList>
    </citation>
    <scope>NUCLEOTIDE SEQUENCE [LARGE SCALE GENOMIC DNA]</scope>
    <source>
        <strain>85-10</strain>
    </source>
</reference>
<comment type="function">
    <text evidence="1">Involved in chemotaxis. Part of a chemotaxis signal transduction system that modulates chemotaxis in response to various stimuli. Catalyzes the demethylation of specific methylglutamate residues introduced into the chemoreceptors (methyl-accepting chemotaxis proteins or MCP) by CheR. Also mediates the irreversible deamidation of specific glutamine residues to glutamic acid.</text>
</comment>
<comment type="catalytic activity">
    <reaction evidence="1">
        <text>[protein]-L-glutamate 5-O-methyl ester + H2O = L-glutamyl-[protein] + methanol + H(+)</text>
        <dbReference type="Rhea" id="RHEA:23236"/>
        <dbReference type="Rhea" id="RHEA-COMP:10208"/>
        <dbReference type="Rhea" id="RHEA-COMP:10311"/>
        <dbReference type="ChEBI" id="CHEBI:15377"/>
        <dbReference type="ChEBI" id="CHEBI:15378"/>
        <dbReference type="ChEBI" id="CHEBI:17790"/>
        <dbReference type="ChEBI" id="CHEBI:29973"/>
        <dbReference type="ChEBI" id="CHEBI:82795"/>
        <dbReference type="EC" id="3.1.1.61"/>
    </reaction>
</comment>
<comment type="catalytic activity">
    <reaction evidence="1">
        <text>L-glutaminyl-[protein] + H2O = L-glutamyl-[protein] + NH4(+)</text>
        <dbReference type="Rhea" id="RHEA:16441"/>
        <dbReference type="Rhea" id="RHEA-COMP:10207"/>
        <dbReference type="Rhea" id="RHEA-COMP:10208"/>
        <dbReference type="ChEBI" id="CHEBI:15377"/>
        <dbReference type="ChEBI" id="CHEBI:28938"/>
        <dbReference type="ChEBI" id="CHEBI:29973"/>
        <dbReference type="ChEBI" id="CHEBI:30011"/>
        <dbReference type="EC" id="3.5.1.44"/>
    </reaction>
</comment>
<comment type="subcellular location">
    <subcellularLocation>
        <location evidence="1">Cytoplasm</location>
    </subcellularLocation>
</comment>
<comment type="domain">
    <text evidence="1">Contains a C-terminal catalytic domain, and an N-terminal region which modulates catalytic activity.</text>
</comment>
<comment type="PTM">
    <text evidence="1">Phosphorylated by CheA. Phosphorylation of the N-terminal regulatory domain activates the methylesterase activity.</text>
</comment>
<comment type="similarity">
    <text evidence="1">Belongs to the CheB family.</text>
</comment>
<comment type="sequence caution" evidence="2">
    <conflict type="erroneous initiation">
        <sequence resource="EMBL-CDS" id="CAJ24734"/>
    </conflict>
</comment>
<dbReference type="EC" id="3.1.1.61" evidence="1"/>
<dbReference type="EC" id="3.5.1.44" evidence="1"/>
<dbReference type="EMBL" id="AM039952">
    <property type="protein sequence ID" value="CAJ24734.1"/>
    <property type="status" value="ALT_INIT"/>
    <property type="molecule type" value="Genomic_DNA"/>
</dbReference>
<dbReference type="SMR" id="Q3BR57"/>
<dbReference type="STRING" id="456327.BJD11_07730"/>
<dbReference type="KEGG" id="xcv:XCV3025"/>
<dbReference type="eggNOG" id="COG2201">
    <property type="taxonomic scope" value="Bacteria"/>
</dbReference>
<dbReference type="HOGENOM" id="CLU_000445_51_0_6"/>
<dbReference type="Proteomes" id="UP000007069">
    <property type="component" value="Chromosome"/>
</dbReference>
<dbReference type="GO" id="GO:0005737">
    <property type="term" value="C:cytoplasm"/>
    <property type="evidence" value="ECO:0007669"/>
    <property type="project" value="UniProtKB-SubCell"/>
</dbReference>
<dbReference type="GO" id="GO:0000156">
    <property type="term" value="F:phosphorelay response regulator activity"/>
    <property type="evidence" value="ECO:0007669"/>
    <property type="project" value="InterPro"/>
</dbReference>
<dbReference type="GO" id="GO:0008984">
    <property type="term" value="F:protein-glutamate methylesterase activity"/>
    <property type="evidence" value="ECO:0007669"/>
    <property type="project" value="UniProtKB-UniRule"/>
</dbReference>
<dbReference type="GO" id="GO:0050568">
    <property type="term" value="F:protein-glutamine glutaminase activity"/>
    <property type="evidence" value="ECO:0007669"/>
    <property type="project" value="UniProtKB-UniRule"/>
</dbReference>
<dbReference type="GO" id="GO:0006935">
    <property type="term" value="P:chemotaxis"/>
    <property type="evidence" value="ECO:0007669"/>
    <property type="project" value="UniProtKB-UniRule"/>
</dbReference>
<dbReference type="CDD" id="cd16432">
    <property type="entry name" value="CheB_Rec"/>
    <property type="match status" value="1"/>
</dbReference>
<dbReference type="CDD" id="cd17541">
    <property type="entry name" value="REC_CheB-like"/>
    <property type="match status" value="1"/>
</dbReference>
<dbReference type="Gene3D" id="3.40.50.2300">
    <property type="match status" value="1"/>
</dbReference>
<dbReference type="Gene3D" id="3.40.50.180">
    <property type="entry name" value="Methylesterase CheB, C-terminal domain"/>
    <property type="match status" value="1"/>
</dbReference>
<dbReference type="HAMAP" id="MF_00099">
    <property type="entry name" value="CheB_chemtxs"/>
    <property type="match status" value="1"/>
</dbReference>
<dbReference type="InterPro" id="IPR008248">
    <property type="entry name" value="CheB-like"/>
</dbReference>
<dbReference type="InterPro" id="IPR035909">
    <property type="entry name" value="CheB_C"/>
</dbReference>
<dbReference type="InterPro" id="IPR011006">
    <property type="entry name" value="CheY-like_superfamily"/>
</dbReference>
<dbReference type="InterPro" id="IPR000673">
    <property type="entry name" value="Sig_transdc_resp-reg_Me-estase"/>
</dbReference>
<dbReference type="InterPro" id="IPR001789">
    <property type="entry name" value="Sig_transdc_resp-reg_receiver"/>
</dbReference>
<dbReference type="NCBIfam" id="NF001965">
    <property type="entry name" value="PRK00742.1"/>
    <property type="match status" value="1"/>
</dbReference>
<dbReference type="NCBIfam" id="NF009206">
    <property type="entry name" value="PRK12555.1"/>
    <property type="match status" value="1"/>
</dbReference>
<dbReference type="PANTHER" id="PTHR42872">
    <property type="entry name" value="PROTEIN-GLUTAMATE METHYLESTERASE/PROTEIN-GLUTAMINE GLUTAMINASE"/>
    <property type="match status" value="1"/>
</dbReference>
<dbReference type="PANTHER" id="PTHR42872:SF6">
    <property type="entry name" value="PROTEIN-GLUTAMATE METHYLESTERASE_PROTEIN-GLUTAMINE GLUTAMINASE"/>
    <property type="match status" value="1"/>
</dbReference>
<dbReference type="Pfam" id="PF01339">
    <property type="entry name" value="CheB_methylest"/>
    <property type="match status" value="1"/>
</dbReference>
<dbReference type="Pfam" id="PF00072">
    <property type="entry name" value="Response_reg"/>
    <property type="match status" value="1"/>
</dbReference>
<dbReference type="PIRSF" id="PIRSF000876">
    <property type="entry name" value="RR_chemtxs_CheB"/>
    <property type="match status" value="1"/>
</dbReference>
<dbReference type="SMART" id="SM00448">
    <property type="entry name" value="REC"/>
    <property type="match status" value="1"/>
</dbReference>
<dbReference type="SUPFAM" id="SSF52172">
    <property type="entry name" value="CheY-like"/>
    <property type="match status" value="1"/>
</dbReference>
<dbReference type="SUPFAM" id="SSF52738">
    <property type="entry name" value="Methylesterase CheB, C-terminal domain"/>
    <property type="match status" value="1"/>
</dbReference>
<dbReference type="PROSITE" id="PS50122">
    <property type="entry name" value="CHEB"/>
    <property type="match status" value="1"/>
</dbReference>
<dbReference type="PROSITE" id="PS50110">
    <property type="entry name" value="RESPONSE_REGULATORY"/>
    <property type="match status" value="1"/>
</dbReference>
<feature type="chain" id="PRO_0000225493" description="Protein-glutamate methylesterase/protein-glutamine glutaminase 2">
    <location>
        <begin position="1"/>
        <end position="352"/>
    </location>
</feature>
<feature type="domain" description="Response regulatory" evidence="1">
    <location>
        <begin position="1"/>
        <end position="116"/>
    </location>
</feature>
<feature type="domain" description="CheB-type methylesterase" evidence="1">
    <location>
        <begin position="162"/>
        <end position="352"/>
    </location>
</feature>
<feature type="active site" evidence="1">
    <location>
        <position position="174"/>
    </location>
</feature>
<feature type="active site" evidence="1">
    <location>
        <position position="200"/>
    </location>
</feature>
<feature type="active site" evidence="1">
    <location>
        <position position="296"/>
    </location>
</feature>
<feature type="modified residue" description="4-aspartylphosphate" evidence="1">
    <location>
        <position position="50"/>
    </location>
</feature>
<organism>
    <name type="scientific">Xanthomonas euvesicatoria pv. vesicatoria (strain 85-10)</name>
    <name type="common">Xanthomonas campestris pv. vesicatoria</name>
    <dbReference type="NCBI Taxonomy" id="316273"/>
    <lineage>
        <taxon>Bacteria</taxon>
        <taxon>Pseudomonadati</taxon>
        <taxon>Pseudomonadota</taxon>
        <taxon>Gammaproteobacteria</taxon>
        <taxon>Lysobacterales</taxon>
        <taxon>Lysobacteraceae</taxon>
        <taxon>Xanthomonas</taxon>
    </lineage>
</organism>
<proteinExistence type="inferred from homology"/>
<protein>
    <recommendedName>
        <fullName evidence="1">Protein-glutamate methylesterase/protein-glutamine glutaminase 2</fullName>
        <ecNumber evidence="1">3.1.1.61</ecNumber>
        <ecNumber evidence="1">3.5.1.44</ecNumber>
    </recommendedName>
</protein>
<evidence type="ECO:0000255" key="1">
    <source>
        <dbReference type="HAMAP-Rule" id="MF_00099"/>
    </source>
</evidence>
<evidence type="ECO:0000305" key="2"/>
<name>CHEB2_XANE5</name>
<sequence length="352" mass="37264">MVVDDSAVVRQVLVGVLNDAPGIDVIATAADPLLAIEKMRQHWPDVIVLDVEMPRMDGITFLRKIMSERPTPVVICSTLTEKGARVTMDALAAGAVAVVTKPRLGLKQFLTDSADELVATVRSAARANVKRLAARVTAAPLEAEVKHTADIILPAQSGRALAQTTERIVAIGTSTGGTQALEEVLTALPRVCPGIVIVQHMPEKFTAAFAARLNGLCQIAVKEAANNDRVMPGRALIAPGGKHLLLRRSGAQYFVEVLEGPPVNRHRPSVDVLFRSAARAAGSNALGIIMTGMGDDGAAGLLEMRQAGARTVAQDEHTSIVFGMPKEAIKRGGADRILPLGAMAREIVTQLQ</sequence>
<gene>
    <name evidence="1" type="primary">cheB2</name>
    <name type="ordered locus">XCV3025</name>
</gene>
<accession>Q3BR57</accession>